<comment type="function">
    <text evidence="6">Binds to actin and plays an important role in the assembly of the Z-disk. May functionally link sarcomeric actin to the desmin intermediate filaments in the heart muscle sarcomeres (PubMed:27733623).</text>
</comment>
<comment type="function">
    <molecule>Isoform 2</molecule>
    <text evidence="4">May play a role in the assembly of focal adhesions.</text>
</comment>
<comment type="subunit">
    <text evidence="5 6">Interacts (via nebulin repeats 1-5) with DESM (via rod region) (PubMed:27733623). Interacts (via SH3 domain) with XIRP2 (PubMed:23985323).</text>
</comment>
<comment type="subunit">
    <molecule>Isoform 2</molecule>
    <text evidence="4">Interacts with ZYX/Zyxin.</text>
</comment>
<comment type="interaction">
    <interactant intactId="EBI-2880203">
        <id>O76041</id>
    </interactant>
    <interactant intactId="EBI-751746">
        <id>Q15027</id>
        <label>ACAP1</label>
    </interactant>
    <organismsDiffer>false</organismsDiffer>
    <experiments>3</experiments>
</comment>
<comment type="interaction">
    <interactant intactId="EBI-2880203">
        <id>O76041</id>
    </interactant>
    <interactant intactId="EBI-77613">
        <id>P05067</id>
        <label>APP</label>
    </interactant>
    <organismsDiffer>false</organismsDiffer>
    <experiments>3</experiments>
</comment>
<comment type="interaction">
    <interactant intactId="EBI-2880203">
        <id>O76041</id>
    </interactant>
    <interactant intactId="EBI-930964">
        <id>P54253</id>
        <label>ATXN1</label>
    </interactant>
    <organismsDiffer>false</organismsDiffer>
    <experiments>3</experiments>
</comment>
<comment type="interaction">
    <interactant intactId="EBI-2880203">
        <id>O76041</id>
    </interactant>
    <interactant intactId="EBI-11977221">
        <id>Q86Z20</id>
        <label>CCDC125</label>
    </interactant>
    <organismsDiffer>false</organismsDiffer>
    <experiments>3</experiments>
</comment>
<comment type="interaction">
    <interactant intactId="EBI-2880203">
        <id>O76041</id>
    </interactant>
    <interactant intactId="EBI-739624">
        <id>Q8NHQ1</id>
        <label>CEP70</label>
    </interactant>
    <organismsDiffer>false</organismsDiffer>
    <experiments>3</experiments>
</comment>
<comment type="interaction">
    <interactant intactId="EBI-2880203">
        <id>O76041</id>
    </interactant>
    <interactant intactId="EBI-10968534">
        <id>P50570-2</id>
        <label>DNM2</label>
    </interactant>
    <organismsDiffer>false</organismsDiffer>
    <experiments>3</experiments>
</comment>
<comment type="interaction">
    <interactant intactId="EBI-2880203">
        <id>O76041</id>
    </interactant>
    <interactant intactId="EBI-10175124">
        <id>Q8IZU0</id>
        <label>FAM9B</label>
    </interactant>
    <organismsDiffer>false</organismsDiffer>
    <experiments>3</experiments>
</comment>
<comment type="interaction">
    <interactant intactId="EBI-2880203">
        <id>O76041</id>
    </interactant>
    <interactant intactId="EBI-10172181">
        <id>Q53SE7</id>
        <label>FLJ13057</label>
    </interactant>
    <organismsDiffer>false</organismsDiffer>
    <experiments>3</experiments>
</comment>
<comment type="interaction">
    <interactant intactId="EBI-2880203">
        <id>O76041</id>
    </interactant>
    <interactant intactId="EBI-744302">
        <id>P14136</id>
        <label>GFAP</label>
    </interactant>
    <organismsDiffer>false</organismsDiffer>
    <experiments>3</experiments>
</comment>
<comment type="interaction">
    <interactant intactId="EBI-2880203">
        <id>O76041</id>
    </interactant>
    <interactant intactId="EBI-1955541">
        <id>Q53GS7</id>
        <label>GLE1</label>
    </interactant>
    <organismsDiffer>false</organismsDiffer>
    <experiments>3</experiments>
</comment>
<comment type="interaction">
    <interactant intactId="EBI-2880203">
        <id>O76041</id>
    </interactant>
    <interactant intactId="EBI-618309">
        <id>Q08379</id>
        <label>GOLGA2</label>
    </interactant>
    <organismsDiffer>false</organismsDiffer>
    <experiments>4</experiments>
</comment>
<comment type="interaction">
    <interactant intactId="EBI-2880203">
        <id>O76041</id>
    </interactant>
    <interactant intactId="EBI-11163335">
        <id>Q9NYA3</id>
        <label>GOLGA6A</label>
    </interactant>
    <organismsDiffer>false</organismsDiffer>
    <experiments>3</experiments>
</comment>
<comment type="interaction">
    <interactant intactId="EBI-2880203">
        <id>O76041</id>
    </interactant>
    <interactant intactId="EBI-748420">
        <id>Q9NSC5</id>
        <label>HOMER3</label>
    </interactant>
    <organismsDiffer>false</organismsDiffer>
    <experiments>3</experiments>
</comment>
<comment type="interaction">
    <interactant intactId="EBI-2880203">
        <id>O76041</id>
    </interactant>
    <interactant intactId="EBI-466029">
        <id>P42858</id>
        <label>HTT</label>
    </interactant>
    <organismsDiffer>false</organismsDiffer>
    <experiments>18</experiments>
</comment>
<comment type="interaction">
    <interactant intactId="EBI-2880203">
        <id>O76041</id>
    </interactant>
    <interactant intactId="EBI-10975473">
        <id>O60333-2</id>
        <label>KIF1B</label>
    </interactant>
    <organismsDiffer>false</organismsDiffer>
    <experiments>3</experiments>
</comment>
<comment type="interaction">
    <interactant intactId="EBI-2880203">
        <id>O76041</id>
    </interactant>
    <interactant intactId="EBI-14069005">
        <id>Q9BVG8-5</id>
        <label>KIFC3</label>
    </interactant>
    <organismsDiffer>false</organismsDiffer>
    <experiments>3</experiments>
</comment>
<comment type="interaction">
    <interactant intactId="EBI-2880203">
        <id>O76041</id>
    </interactant>
    <interactant intactId="EBI-351935">
        <id>P02545</id>
        <label>LMNA</label>
    </interactant>
    <organismsDiffer>false</organismsDiffer>
    <experiments>3</experiments>
</comment>
<comment type="interaction">
    <interactant intactId="EBI-2880203">
        <id>O76041</id>
    </interactant>
    <interactant intactId="EBI-741037">
        <id>Q9BRK4</id>
        <label>LZTS2</label>
    </interactant>
    <organismsDiffer>false</organismsDiffer>
    <experiments>3</experiments>
</comment>
<comment type="interaction">
    <interactant intactId="EBI-2880203">
        <id>O76041</id>
    </interactant>
    <interactant intactId="EBI-742610">
        <id>Q9Y6D9</id>
        <label>MAD1L1</label>
    </interactant>
    <organismsDiffer>false</organismsDiffer>
    <experiments>7</experiments>
</comment>
<comment type="interaction">
    <interactant intactId="EBI-2880203">
        <id>O76041</id>
    </interactant>
    <interactant intactId="EBI-2548751">
        <id>Q8TD10</id>
        <label>MIPOL1</label>
    </interactant>
    <organismsDiffer>false</organismsDiffer>
    <experiments>3</experiments>
</comment>
<comment type="interaction">
    <interactant intactId="EBI-2880203">
        <id>O76041</id>
    </interactant>
    <interactant intactId="EBI-475646">
        <id>P07196</id>
        <label>NEFL</label>
    </interactant>
    <organismsDiffer>false</organismsDiffer>
    <experiments>3</experiments>
</comment>
<comment type="interaction">
    <interactant intactId="EBI-2880203">
        <id>O76041</id>
    </interactant>
    <interactant intactId="EBI-1014472">
        <id>P35240</id>
        <label>NF2</label>
    </interactant>
    <organismsDiffer>false</organismsDiffer>
    <experiments>3</experiments>
</comment>
<comment type="interaction">
    <interactant intactId="EBI-2880203">
        <id>O76041</id>
    </interactant>
    <interactant intactId="EBI-10178410">
        <id>Q86Y26</id>
        <label>NUTM1</label>
    </interactant>
    <organismsDiffer>false</organismsDiffer>
    <experiments>3</experiments>
</comment>
<comment type="interaction">
    <interactant intactId="EBI-2880203">
        <id>O76041</id>
    </interactant>
    <interactant intactId="EBI-752057">
        <id>Q7Z412</id>
        <label>PEX26</label>
    </interactant>
    <organismsDiffer>false</organismsDiffer>
    <experiments>3</experiments>
</comment>
<comment type="interaction">
    <interactant intactId="EBI-2880203">
        <id>O76041</id>
    </interactant>
    <interactant intactId="EBI-14066006">
        <id>Q4G0R1</id>
        <label>PIBF1</label>
    </interactant>
    <organismsDiffer>false</organismsDiffer>
    <experiments>3</experiments>
</comment>
<comment type="interaction">
    <interactant intactId="EBI-2880203">
        <id>O76041</id>
    </interactant>
    <interactant intactId="EBI-79893">
        <id>Q92569</id>
        <label>PIK3R3</label>
    </interactant>
    <organismsDiffer>false</organismsDiffer>
    <experiments>3</experiments>
</comment>
<comment type="interaction">
    <interactant intactId="EBI-2880203">
        <id>O76041</id>
    </interactant>
    <interactant intactId="EBI-2010251">
        <id>P49810</id>
        <label>PSEN2</label>
    </interactant>
    <organismsDiffer>false</organismsDiffer>
    <experiments>3</experiments>
</comment>
<comment type="interaction">
    <interactant intactId="EBI-2880203">
        <id>O76041</id>
    </interactant>
    <interactant intactId="EBI-347462">
        <id>P47897</id>
        <label>QARS1</label>
    </interactant>
    <organismsDiffer>false</organismsDiffer>
    <experiments>3</experiments>
</comment>
<comment type="interaction">
    <interactant intactId="EBI-2880203">
        <id>O76041</id>
    </interactant>
    <interactant intactId="EBI-413317">
        <id>Q96R06</id>
        <label>SPAG5</label>
    </interactant>
    <organismsDiffer>false</organismsDiffer>
    <experiments>3</experiments>
</comment>
<comment type="interaction">
    <interactant intactId="EBI-2880203">
        <id>O76041</id>
    </interactant>
    <interactant intactId="EBI-5235340">
        <id>Q7Z699</id>
        <label>SPRED1</label>
    </interactant>
    <organismsDiffer>false</organismsDiffer>
    <experiments>3</experiments>
</comment>
<comment type="interaction">
    <interactant intactId="EBI-2880203">
        <id>O76041</id>
    </interactant>
    <interactant intactId="EBI-359224">
        <id>Q13077</id>
        <label>TRAF1</label>
    </interactant>
    <organismsDiffer>false</organismsDiffer>
    <experiments>4</experiments>
</comment>
<comment type="interaction">
    <interactant intactId="EBI-2880203">
        <id>O76041</id>
    </interactant>
    <interactant intactId="EBI-355744">
        <id>Q12933</id>
        <label>TRAF2</label>
    </interactant>
    <organismsDiffer>false</organismsDiffer>
    <experiments>7</experiments>
</comment>
<comment type="interaction">
    <interactant intactId="EBI-2880203">
        <id>O76041</id>
    </interactant>
    <interactant intactId="EBI-719493">
        <id>P14373</id>
        <label>TRIM27</label>
    </interactant>
    <organismsDiffer>false</organismsDiffer>
    <experiments>3</experiments>
</comment>
<comment type="interaction">
    <interactant intactId="EBI-2880203">
        <id>O76041</id>
    </interactant>
    <interactant intactId="EBI-11027067">
        <id>P18206-2</id>
        <label>VCL</label>
    </interactant>
    <organismsDiffer>false</organismsDiffer>
    <experiments>3</experiments>
</comment>
<comment type="interaction">
    <interactant intactId="EBI-2880203">
        <id>O76041</id>
    </interactant>
    <interactant intactId="EBI-10183064">
        <id>Q8N5A5-2</id>
        <label>ZGPAT</label>
    </interactant>
    <organismsDiffer>false</organismsDiffer>
    <experiments>3</experiments>
</comment>
<comment type="interaction">
    <interactant intactId="EBI-2880203">
        <id>O76041</id>
    </interactant>
    <interactant intactId="EBI-10175581">
        <id>B2R8Y4</id>
    </interactant>
    <organismsDiffer>false</organismsDiffer>
    <experiments>3</experiments>
</comment>
<comment type="subcellular location">
    <molecule>Isoform 2</molecule>
    <subcellularLocation>
        <location evidence="4">Cytoplasm</location>
    </subcellularLocation>
</comment>
<comment type="alternative products">
    <event type="alternative splicing"/>
    <isoform>
        <id>O76041-1</id>
        <name>1</name>
        <sequence type="displayed"/>
    </isoform>
    <isoform>
        <id>O76041-2</id>
        <name>2</name>
        <name>LIM-nebulette</name>
        <name>LNEBL</name>
        <sequence type="described" ref="VSP_043816 VSP_043817 VSP_043818"/>
    </isoform>
</comment>
<comment type="tissue specificity">
    <text>Abundantly expressed in cardiac muscle, but not in skeletal or smooth muscle. Localized to Z-lines in cardiac cells and to dense bodies in nonmuscle cells. Isoform 2 is expressed in non-muscle cells such as in fibroblasts.</text>
</comment>
<comment type="miscellaneous">
    <molecule>Isoform 2</molecule>
    <text evidence="10">Expressed in non-muscle cells. May be transcribed from an upstream promoter active in non-muscle cells.</text>
</comment>
<comment type="sequence caution" evidence="10">
    <conflict type="erroneous gene model prediction">
        <sequence resource="EMBL-CDS" id="AAI40745"/>
    </conflict>
</comment>
<protein>
    <recommendedName>
        <fullName>Nebulette</fullName>
    </recommendedName>
    <alternativeName>
        <fullName>Actin-binding Z-disk protein</fullName>
    </alternativeName>
</protein>
<reference key="1">
    <citation type="journal article" date="1998" name="J. Mol. Biol.">
        <title>Characterization of nebulette and nebulin and emerging concepts of their roles for vertebrate Z-discs.</title>
        <authorList>
            <person name="Millevoi S."/>
            <person name="Trombitas K."/>
            <person name="Kolmerer B."/>
            <person name="Kostin S."/>
            <person name="Schaper J."/>
            <person name="Pelin K."/>
            <person name="Granzier H."/>
            <person name="Labeit S."/>
        </authorList>
    </citation>
    <scope>NUCLEOTIDE SEQUENCE [MRNA] (ISOFORM 1)</scope>
    <source>
        <tissue>Heart muscle</tissue>
    </source>
</reference>
<reference key="2">
    <citation type="journal article" date="1999" name="Cell Motil. Cytoskeleton">
        <title>Functional dissection of nebulette demonstrates actin binding of nebulin-like repeats and Z-line targeting of SH3 and linker domains.</title>
        <authorList>
            <person name="Moncman C.L."/>
            <person name="Wang K."/>
        </authorList>
    </citation>
    <scope>NUCLEOTIDE SEQUENCE [MRNA] (ISOFORM 1)</scope>
    <source>
        <tissue>Heart</tissue>
    </source>
</reference>
<reference key="3">
    <citation type="journal article" date="2004" name="J. Biol. Chem.">
        <title>Zyxin interacts with the SH3 domains of the cytoskeletal proteins LIM-nebulette and Lasp-1.</title>
        <authorList>
            <person name="Li B."/>
            <person name="Zhuang L."/>
            <person name="Trueb B."/>
        </authorList>
    </citation>
    <scope>NUCLEOTIDE SEQUENCE [MRNA] (ISOFORM 2)</scope>
    <scope>FUNCTION (ISOFORM 2)</scope>
    <scope>INTERACTION WITH ZYX (ISOFORM 2)</scope>
    <scope>SUBCELLULAR LOCATION (ISOFORM 2)</scope>
    <source>
        <tissue>Placenta</tissue>
    </source>
</reference>
<reference key="4">
    <citation type="journal article" date="2004" name="Nat. Genet.">
        <title>Complete sequencing and characterization of 21,243 full-length human cDNAs.</title>
        <authorList>
            <person name="Ota T."/>
            <person name="Suzuki Y."/>
            <person name="Nishikawa T."/>
            <person name="Otsuki T."/>
            <person name="Sugiyama T."/>
            <person name="Irie R."/>
            <person name="Wakamatsu A."/>
            <person name="Hayashi K."/>
            <person name="Sato H."/>
            <person name="Nagai K."/>
            <person name="Kimura K."/>
            <person name="Makita H."/>
            <person name="Sekine M."/>
            <person name="Obayashi M."/>
            <person name="Nishi T."/>
            <person name="Shibahara T."/>
            <person name="Tanaka T."/>
            <person name="Ishii S."/>
            <person name="Yamamoto J."/>
            <person name="Saito K."/>
            <person name="Kawai Y."/>
            <person name="Isono Y."/>
            <person name="Nakamura Y."/>
            <person name="Nagahari K."/>
            <person name="Murakami K."/>
            <person name="Yasuda T."/>
            <person name="Iwayanagi T."/>
            <person name="Wagatsuma M."/>
            <person name="Shiratori A."/>
            <person name="Sudo H."/>
            <person name="Hosoiri T."/>
            <person name="Kaku Y."/>
            <person name="Kodaira H."/>
            <person name="Kondo H."/>
            <person name="Sugawara M."/>
            <person name="Takahashi M."/>
            <person name="Kanda K."/>
            <person name="Yokoi T."/>
            <person name="Furuya T."/>
            <person name="Kikkawa E."/>
            <person name="Omura Y."/>
            <person name="Abe K."/>
            <person name="Kamihara K."/>
            <person name="Katsuta N."/>
            <person name="Sato K."/>
            <person name="Tanikawa M."/>
            <person name="Yamazaki M."/>
            <person name="Ninomiya K."/>
            <person name="Ishibashi T."/>
            <person name="Yamashita H."/>
            <person name="Murakawa K."/>
            <person name="Fujimori K."/>
            <person name="Tanai H."/>
            <person name="Kimata M."/>
            <person name="Watanabe M."/>
            <person name="Hiraoka S."/>
            <person name="Chiba Y."/>
            <person name="Ishida S."/>
            <person name="Ono Y."/>
            <person name="Takiguchi S."/>
            <person name="Watanabe S."/>
            <person name="Yosida M."/>
            <person name="Hotuta T."/>
            <person name="Kusano J."/>
            <person name="Kanehori K."/>
            <person name="Takahashi-Fujii A."/>
            <person name="Hara H."/>
            <person name="Tanase T.-O."/>
            <person name="Nomura Y."/>
            <person name="Togiya S."/>
            <person name="Komai F."/>
            <person name="Hara R."/>
            <person name="Takeuchi K."/>
            <person name="Arita M."/>
            <person name="Imose N."/>
            <person name="Musashino K."/>
            <person name="Yuuki H."/>
            <person name="Oshima A."/>
            <person name="Sasaki N."/>
            <person name="Aotsuka S."/>
            <person name="Yoshikawa Y."/>
            <person name="Matsunawa H."/>
            <person name="Ichihara T."/>
            <person name="Shiohata N."/>
            <person name="Sano S."/>
            <person name="Moriya S."/>
            <person name="Momiyama H."/>
            <person name="Satoh N."/>
            <person name="Takami S."/>
            <person name="Terashima Y."/>
            <person name="Suzuki O."/>
            <person name="Nakagawa S."/>
            <person name="Senoh A."/>
            <person name="Mizoguchi H."/>
            <person name="Goto Y."/>
            <person name="Shimizu F."/>
            <person name="Wakebe H."/>
            <person name="Hishigaki H."/>
            <person name="Watanabe T."/>
            <person name="Sugiyama A."/>
            <person name="Takemoto M."/>
            <person name="Kawakami B."/>
            <person name="Yamazaki M."/>
            <person name="Watanabe K."/>
            <person name="Kumagai A."/>
            <person name="Itakura S."/>
            <person name="Fukuzumi Y."/>
            <person name="Fujimori Y."/>
            <person name="Komiyama M."/>
            <person name="Tashiro H."/>
            <person name="Tanigami A."/>
            <person name="Fujiwara T."/>
            <person name="Ono T."/>
            <person name="Yamada K."/>
            <person name="Fujii Y."/>
            <person name="Ozaki K."/>
            <person name="Hirao M."/>
            <person name="Ohmori Y."/>
            <person name="Kawabata A."/>
            <person name="Hikiji T."/>
            <person name="Kobatake N."/>
            <person name="Inagaki H."/>
            <person name="Ikema Y."/>
            <person name="Okamoto S."/>
            <person name="Okitani R."/>
            <person name="Kawakami T."/>
            <person name="Noguchi S."/>
            <person name="Itoh T."/>
            <person name="Shigeta K."/>
            <person name="Senba T."/>
            <person name="Matsumura K."/>
            <person name="Nakajima Y."/>
            <person name="Mizuno T."/>
            <person name="Morinaga M."/>
            <person name="Sasaki M."/>
            <person name="Togashi T."/>
            <person name="Oyama M."/>
            <person name="Hata H."/>
            <person name="Watanabe M."/>
            <person name="Komatsu T."/>
            <person name="Mizushima-Sugano J."/>
            <person name="Satoh T."/>
            <person name="Shirai Y."/>
            <person name="Takahashi Y."/>
            <person name="Nakagawa K."/>
            <person name="Okumura K."/>
            <person name="Nagase T."/>
            <person name="Nomura N."/>
            <person name="Kikuchi H."/>
            <person name="Masuho Y."/>
            <person name="Yamashita R."/>
            <person name="Nakai K."/>
            <person name="Yada T."/>
            <person name="Nakamura Y."/>
            <person name="Ohara O."/>
            <person name="Isogai T."/>
            <person name="Sugano S."/>
        </authorList>
    </citation>
    <scope>NUCLEOTIDE SEQUENCE [LARGE SCALE MRNA] (ISOFORM 2)</scope>
    <source>
        <tissue>Brain</tissue>
    </source>
</reference>
<reference key="5">
    <citation type="submission" date="2007-02" db="EMBL/GenBank/DDBJ databases">
        <authorList>
            <consortium name="NHLBI resequencing and genotyping service (RS&amp;G)"/>
        </authorList>
    </citation>
    <scope>NUCLEOTIDE SEQUENCE [GENOMIC DNA]</scope>
</reference>
<reference key="6">
    <citation type="journal article" date="2004" name="Nature">
        <title>The DNA sequence and comparative analysis of human chromosome 10.</title>
        <authorList>
            <person name="Deloukas P."/>
            <person name="Earthrowl M.E."/>
            <person name="Grafham D.V."/>
            <person name="Rubenfield M."/>
            <person name="French L."/>
            <person name="Steward C.A."/>
            <person name="Sims S.K."/>
            <person name="Jones M.C."/>
            <person name="Searle S."/>
            <person name="Scott C."/>
            <person name="Howe K."/>
            <person name="Hunt S.E."/>
            <person name="Andrews T.D."/>
            <person name="Gilbert J.G.R."/>
            <person name="Swarbreck D."/>
            <person name="Ashurst J.L."/>
            <person name="Taylor A."/>
            <person name="Battles J."/>
            <person name="Bird C.P."/>
            <person name="Ainscough R."/>
            <person name="Almeida J.P."/>
            <person name="Ashwell R.I.S."/>
            <person name="Ambrose K.D."/>
            <person name="Babbage A.K."/>
            <person name="Bagguley C.L."/>
            <person name="Bailey J."/>
            <person name="Banerjee R."/>
            <person name="Bates K."/>
            <person name="Beasley H."/>
            <person name="Bray-Allen S."/>
            <person name="Brown A.J."/>
            <person name="Brown J.Y."/>
            <person name="Burford D.C."/>
            <person name="Burrill W."/>
            <person name="Burton J."/>
            <person name="Cahill P."/>
            <person name="Camire D."/>
            <person name="Carter N.P."/>
            <person name="Chapman J.C."/>
            <person name="Clark S.Y."/>
            <person name="Clarke G."/>
            <person name="Clee C.M."/>
            <person name="Clegg S."/>
            <person name="Corby N."/>
            <person name="Coulson A."/>
            <person name="Dhami P."/>
            <person name="Dutta I."/>
            <person name="Dunn M."/>
            <person name="Faulkner L."/>
            <person name="Frankish A."/>
            <person name="Frankland J.A."/>
            <person name="Garner P."/>
            <person name="Garnett J."/>
            <person name="Gribble S."/>
            <person name="Griffiths C."/>
            <person name="Grocock R."/>
            <person name="Gustafson E."/>
            <person name="Hammond S."/>
            <person name="Harley J.L."/>
            <person name="Hart E."/>
            <person name="Heath P.D."/>
            <person name="Ho T.P."/>
            <person name="Hopkins B."/>
            <person name="Horne J."/>
            <person name="Howden P.J."/>
            <person name="Huckle E."/>
            <person name="Hynds C."/>
            <person name="Johnson C."/>
            <person name="Johnson D."/>
            <person name="Kana A."/>
            <person name="Kay M."/>
            <person name="Kimberley A.M."/>
            <person name="Kershaw J.K."/>
            <person name="Kokkinaki M."/>
            <person name="Laird G.K."/>
            <person name="Lawlor S."/>
            <person name="Lee H.M."/>
            <person name="Leongamornlert D.A."/>
            <person name="Laird G."/>
            <person name="Lloyd C."/>
            <person name="Lloyd D.M."/>
            <person name="Loveland J."/>
            <person name="Lovell J."/>
            <person name="McLaren S."/>
            <person name="McLay K.E."/>
            <person name="McMurray A."/>
            <person name="Mashreghi-Mohammadi M."/>
            <person name="Matthews L."/>
            <person name="Milne S."/>
            <person name="Nickerson T."/>
            <person name="Nguyen M."/>
            <person name="Overton-Larty E."/>
            <person name="Palmer S.A."/>
            <person name="Pearce A.V."/>
            <person name="Peck A.I."/>
            <person name="Pelan S."/>
            <person name="Phillimore B."/>
            <person name="Porter K."/>
            <person name="Rice C.M."/>
            <person name="Rogosin A."/>
            <person name="Ross M.T."/>
            <person name="Sarafidou T."/>
            <person name="Sehra H.K."/>
            <person name="Shownkeen R."/>
            <person name="Skuce C.D."/>
            <person name="Smith M."/>
            <person name="Standring L."/>
            <person name="Sycamore N."/>
            <person name="Tester J."/>
            <person name="Thorpe A."/>
            <person name="Torcasso W."/>
            <person name="Tracey A."/>
            <person name="Tromans A."/>
            <person name="Tsolas J."/>
            <person name="Wall M."/>
            <person name="Walsh J."/>
            <person name="Wang H."/>
            <person name="Weinstock K."/>
            <person name="West A.P."/>
            <person name="Willey D.L."/>
            <person name="Whitehead S.L."/>
            <person name="Wilming L."/>
            <person name="Wray P.W."/>
            <person name="Young L."/>
            <person name="Chen Y."/>
            <person name="Lovering R.C."/>
            <person name="Moschonas N.K."/>
            <person name="Siebert R."/>
            <person name="Fechtel K."/>
            <person name="Bentley D."/>
            <person name="Durbin R.M."/>
            <person name="Hubbard T."/>
            <person name="Doucette-Stamm L."/>
            <person name="Beck S."/>
            <person name="Smith D.R."/>
            <person name="Rogers J."/>
        </authorList>
    </citation>
    <scope>NUCLEOTIDE SEQUENCE [LARGE SCALE GENOMIC DNA]</scope>
</reference>
<reference key="7">
    <citation type="submission" date="2005-09" db="EMBL/GenBank/DDBJ databases">
        <authorList>
            <person name="Mural R.J."/>
            <person name="Istrail S."/>
            <person name="Sutton G.G."/>
            <person name="Florea L."/>
            <person name="Halpern A.L."/>
            <person name="Mobarry C.M."/>
            <person name="Lippert R."/>
            <person name="Walenz B."/>
            <person name="Shatkay H."/>
            <person name="Dew I."/>
            <person name="Miller J.R."/>
            <person name="Flanigan M.J."/>
            <person name="Edwards N.J."/>
            <person name="Bolanos R."/>
            <person name="Fasulo D."/>
            <person name="Halldorsson B.V."/>
            <person name="Hannenhalli S."/>
            <person name="Turner R."/>
            <person name="Yooseph S."/>
            <person name="Lu F."/>
            <person name="Nusskern D.R."/>
            <person name="Shue B.C."/>
            <person name="Zheng X.H."/>
            <person name="Zhong F."/>
            <person name="Delcher A.L."/>
            <person name="Huson D.H."/>
            <person name="Kravitz S.A."/>
            <person name="Mouchard L."/>
            <person name="Reinert K."/>
            <person name="Remington K.A."/>
            <person name="Clark A.G."/>
            <person name="Waterman M.S."/>
            <person name="Eichler E.E."/>
            <person name="Adams M.D."/>
            <person name="Hunkapiller M.W."/>
            <person name="Myers E.W."/>
            <person name="Venter J.C."/>
        </authorList>
    </citation>
    <scope>NUCLEOTIDE SEQUENCE [LARGE SCALE GENOMIC DNA]</scope>
</reference>
<reference key="8">
    <citation type="journal article" date="2004" name="Genome Res.">
        <title>The status, quality, and expansion of the NIH full-length cDNA project: the Mammalian Gene Collection (MGC).</title>
        <authorList>
            <consortium name="The MGC Project Team"/>
        </authorList>
    </citation>
    <scope>NUCLEOTIDE SEQUENCE [LARGE SCALE MRNA] (ISOFORMS 1 AND 2)</scope>
</reference>
<reference key="9">
    <citation type="journal article" date="2014" name="Mol. Cell. Proteomics">
        <title>Immunoaffinity enrichment and mass spectrometry analysis of protein methylation.</title>
        <authorList>
            <person name="Guo A."/>
            <person name="Gu H."/>
            <person name="Zhou J."/>
            <person name="Mulhern D."/>
            <person name="Wang Y."/>
            <person name="Lee K.A."/>
            <person name="Yang V."/>
            <person name="Aguiar M."/>
            <person name="Kornhauser J."/>
            <person name="Jia X."/>
            <person name="Ren J."/>
            <person name="Beausoleil S.A."/>
            <person name="Silva J.C."/>
            <person name="Vemulapalli V."/>
            <person name="Bedford M.T."/>
            <person name="Comb M.J."/>
        </authorList>
    </citation>
    <scope>METHYLATION [LARGE SCALE ANALYSIS] AT ARG-795</scope>
    <scope>METHYLATION [LARGE SCALE ANALYSIS] AT ARG-96 (ISOFORM 2)</scope>
    <scope>IDENTIFICATION BY MASS SPECTROMETRY [LARGE SCALE ANALYSIS]</scope>
    <source>
        <tissue>Colon carcinoma</tissue>
    </source>
</reference>
<reference key="10">
    <citation type="journal article" date="2016" name="Mol. Biol. Cell">
        <title>Nebulette is a powerful cytolinker organizing desmin and actin in mouse hearts.</title>
        <authorList>
            <person name="Hernandez D.A."/>
            <person name="Bennett C.M."/>
            <person name="Dunina-Barkovskaya L."/>
            <person name="Wedig T."/>
            <person name="Capetanaki Y."/>
            <person name="Herrmann H."/>
            <person name="Conover G.M."/>
        </authorList>
    </citation>
    <scope>FUNCTION</scope>
    <scope>INTERACTION WITH DES</scope>
</reference>
<reference evidence="12" key="11">
    <citation type="journal article" date="2013" name="Mol. Biol. Cell">
        <title>Identification of Xin-repeat proteins as novel ligands of the SH3 domains of nebulin and nebulette and analysis of their interaction during myofibril formation and remodeling.</title>
        <authorList>
            <person name="Eulitz S."/>
            <person name="Sauer F."/>
            <person name="Pelissier M.C."/>
            <person name="Boisguerin P."/>
            <person name="Molt S."/>
            <person name="Schuld J."/>
            <person name="Orfanos Z."/>
            <person name="Kley R.A."/>
            <person name="Volkmer R."/>
            <person name="Wilmanns M."/>
            <person name="Kirfel G."/>
            <person name="van der Ven P.F."/>
            <person name="Fuerst D.O."/>
        </authorList>
    </citation>
    <scope>X-RAY CRYSTALLOGRAPHY (1.20 ANGSTROMS) OF 955-1014 IN COMPLEX WITH XIRP2</scope>
    <scope>INTERACTION WITH XIRP2</scope>
</reference>
<reference key="12">
    <citation type="journal article" date="2000" name="Hum. Genet.">
        <title>Characterization of the human nebulette gene: a polymorphism in an actin-binding motif is associated with nonfamilial idiopathic dilated cardiomyopathy.</title>
        <authorList>
            <person name="Arimura T."/>
            <person name="Nakamura T."/>
            <person name="Hiroi S."/>
            <person name="Satoh M."/>
            <person name="Takahashi M."/>
            <person name="Ohbuchi N."/>
            <person name="Ueda K."/>
            <person name="Nouchi T."/>
            <person name="Yamaguchi N."/>
            <person name="Akai J."/>
            <person name="Matsumori A."/>
            <person name="Sasayama S."/>
            <person name="Kimura A."/>
        </authorList>
    </citation>
    <scope>VARIANTS HIS-187; VAL-351; LYS-654 AND ALA-728</scope>
</reference>
<feature type="chain" id="PRO_0000096774" description="Nebulette">
    <location>
        <begin position="1"/>
        <end position="1014"/>
    </location>
</feature>
<feature type="repeat" description="Nebulin 1">
    <location>
        <begin position="29"/>
        <end position="63"/>
    </location>
</feature>
<feature type="repeat" description="Nebulin 2">
    <location>
        <begin position="64"/>
        <end position="99"/>
    </location>
</feature>
<feature type="repeat" description="Nebulin 3">
    <location>
        <begin position="100"/>
        <end position="136"/>
    </location>
</feature>
<feature type="repeat" description="Nebulin 4">
    <location>
        <begin position="137"/>
        <end position="172"/>
    </location>
</feature>
<feature type="repeat" description="Nebulin 5">
    <location>
        <begin position="173"/>
        <end position="205"/>
    </location>
</feature>
<feature type="repeat" description="Nebulin 6">
    <location>
        <begin position="206"/>
        <end position="241"/>
    </location>
</feature>
<feature type="repeat" description="Nebulin 7">
    <location>
        <begin position="242"/>
        <end position="278"/>
    </location>
</feature>
<feature type="repeat" description="Nebulin 8">
    <location>
        <begin position="279"/>
        <end position="313"/>
    </location>
</feature>
<feature type="repeat" description="Nebulin 9">
    <location>
        <begin position="314"/>
        <end position="348"/>
    </location>
</feature>
<feature type="repeat" description="Nebulin 10">
    <location>
        <begin position="349"/>
        <end position="385"/>
    </location>
</feature>
<feature type="repeat" description="Nebulin 11">
    <location>
        <begin position="386"/>
        <end position="422"/>
    </location>
</feature>
<feature type="repeat" description="Nebulin 12">
    <location>
        <begin position="423"/>
        <end position="459"/>
    </location>
</feature>
<feature type="repeat" description="Nebulin 13">
    <location>
        <begin position="460"/>
        <end position="496"/>
    </location>
</feature>
<feature type="repeat" description="Nebulin 14">
    <location>
        <begin position="497"/>
        <end position="533"/>
    </location>
</feature>
<feature type="repeat" description="Nebulin 15">
    <location>
        <begin position="534"/>
        <end position="569"/>
    </location>
</feature>
<feature type="repeat" description="Nebulin 16">
    <location>
        <begin position="570"/>
        <end position="599"/>
    </location>
</feature>
<feature type="repeat" description="Nebulin 17">
    <location>
        <begin position="600"/>
        <end position="635"/>
    </location>
</feature>
<feature type="repeat" description="Nebulin 18">
    <location>
        <begin position="636"/>
        <end position="666"/>
    </location>
</feature>
<feature type="repeat" description="Nebulin 19">
    <location>
        <begin position="667"/>
        <end position="693"/>
    </location>
</feature>
<feature type="repeat" description="Nebulin 20">
    <location>
        <begin position="694"/>
        <end position="728"/>
    </location>
</feature>
<feature type="repeat" description="Nebulin 21">
    <location>
        <begin position="729"/>
        <end position="759"/>
    </location>
</feature>
<feature type="repeat" description="Nebulin 22">
    <location>
        <begin position="760"/>
        <end position="794"/>
    </location>
</feature>
<feature type="repeat" description="Nebulin 23">
    <location>
        <begin position="795"/>
        <end position="830"/>
    </location>
</feature>
<feature type="domain" description="SH3" evidence="1">
    <location>
        <begin position="954"/>
        <end position="1014"/>
    </location>
</feature>
<feature type="region of interest" description="Disordered" evidence="2">
    <location>
        <begin position="1"/>
        <end position="24"/>
    </location>
</feature>
<feature type="region of interest" description="Linker">
    <location>
        <begin position="836"/>
        <end position="953"/>
    </location>
</feature>
<feature type="compositionally biased region" description="Acidic residues" evidence="2">
    <location>
        <begin position="9"/>
        <end position="24"/>
    </location>
</feature>
<feature type="modified residue" description="Omega-N-methylarginine" evidence="13">
    <location>
        <position position="795"/>
    </location>
</feature>
<feature type="splice variant" id="VSP_043816" description="In isoform 2." evidence="7 8 9">
    <location>
        <begin position="1"/>
        <end position="664"/>
    </location>
</feature>
<feature type="splice variant" id="VSP_043817" description="In isoform 2." evidence="7 8 9">
    <original>TPVSMTPEIERVRRNQEQLSAVKYKGELQRGTAISDPPELKRAKENQKNISNVYYRGQLGRATTLSVTPEMERVKKNQENISSVKYTQDHKQMKGRPSLILDTPAMRHVKEAQNHISM</original>
    <variation>MNPQCARCGKVVYPTEKVNCLDKYWHKGCFHCEVCKMALNMNNYKGYEKKPYCNAHYPKQSFTTVADTPENLRLKQQSELQSQVKYKRDFEESKGRGFSIVTDTPELQRLKRTQEQISN</variation>
    <location>
        <begin position="665"/>
        <end position="782"/>
    </location>
</feature>
<feature type="splice variant" id="VSP_043818" description="In isoform 2." evidence="7 8 9">
    <location>
        <begin position="840"/>
        <end position="920"/>
    </location>
</feature>
<feature type="sequence variant" id="VAR_010289" description="In dbSNP:rs75301590." evidence="3">
    <original>Q</original>
    <variation>H</variation>
    <location>
        <position position="187"/>
    </location>
</feature>
<feature type="sequence variant" id="VAR_021887" description="In dbSNP:rs2296610.">
    <original>A</original>
    <variation>D</variation>
    <location>
        <position position="219"/>
    </location>
</feature>
<feature type="sequence variant" id="VAR_010290" description="In dbSNP:rs4025981." evidence="3">
    <original>M</original>
    <variation>V</variation>
    <location>
        <position position="351"/>
    </location>
</feature>
<feature type="sequence variant" id="VAR_051229" description="In dbSNP:rs41277370.">
    <original>D</original>
    <variation>H</variation>
    <location>
        <position position="378"/>
    </location>
</feature>
<feature type="sequence variant" id="VAR_010291" description="Higher frequency of homozygotes in a cohort of non-familial cardiomyopathy Japanese patients as compared to healthy controls; dbSNP:rs4748728." evidence="3">
    <original>N</original>
    <variation>K</variation>
    <location>
        <position position="654"/>
    </location>
</feature>
<feature type="sequence variant" id="VAR_010292" description="In dbSNP:rs71535732." evidence="3">
    <original>T</original>
    <variation>A</variation>
    <location>
        <position position="728"/>
    </location>
</feature>
<feature type="sequence conflict" description="In Ref. 2; AAF24858." evidence="10" ref="2">
    <original>RYKEEFKK</original>
    <variation>VIKKSLKS</variation>
    <location>
        <begin position="53"/>
        <end position="60"/>
    </location>
</feature>
<feature type="sequence conflict" description="In Ref. 2; AAF24858." evidence="10" ref="2">
    <original>N</original>
    <variation>T</variation>
    <location>
        <position position="75"/>
    </location>
</feature>
<feature type="sequence conflict" description="In Ref. 2; AAF24858." evidence="10" ref="2">
    <original>KHDAAKGFSD</original>
    <variation>NMMLPRILS</variation>
    <location>
        <begin position="129"/>
        <end position="138"/>
    </location>
</feature>
<feature type="sequence conflict" description="In Ref. 2; AAF24858." evidence="10" ref="2">
    <original>RASEMAS</original>
    <variation>QPLKWQG</variation>
    <location>
        <begin position="439"/>
        <end position="445"/>
    </location>
</feature>
<feature type="sequence conflict" description="In Ref. 2; AAF24858." evidence="10" ref="2">
    <original>RAKENQKNISNVYYRGQLGRA</original>
    <variation>PKETRKTSACLLQSSAGES</variation>
    <location>
        <begin position="706"/>
        <end position="726"/>
    </location>
</feature>
<feature type="sequence conflict" description="In Ref. 2; AAF24858." evidence="10" ref="2">
    <original>T</original>
    <variation>I</variation>
    <location>
        <position position="732"/>
    </location>
</feature>
<feature type="sequence conflict" description="In Ref. 2; AAF24858." evidence="10" ref="2">
    <original>K</original>
    <variation>E</variation>
    <location>
        <position position="740"/>
    </location>
</feature>
<feature type="sequence conflict" description="In Ref. 2; AAF24858." evidence="10" ref="2">
    <original>E</original>
    <variation>G</variation>
    <location>
        <position position="743"/>
    </location>
</feature>
<feature type="sequence conflict" description="In Ref. 2; AAF24858." evidence="10" ref="2">
    <original>EIY</original>
    <variation>RDL</variation>
    <location>
        <begin position="902"/>
        <end position="904"/>
    </location>
</feature>
<feature type="strand" evidence="14">
    <location>
        <begin position="959"/>
        <end position="963"/>
    </location>
</feature>
<feature type="strand" evidence="14">
    <location>
        <begin position="980"/>
        <end position="986"/>
    </location>
</feature>
<feature type="strand" evidence="14">
    <location>
        <begin position="988"/>
        <end position="996"/>
    </location>
</feature>
<feature type="turn" evidence="14">
    <location>
        <begin position="997"/>
        <end position="1000"/>
    </location>
</feature>
<feature type="strand" evidence="14">
    <location>
        <begin position="1001"/>
        <end position="1006"/>
    </location>
</feature>
<feature type="helix" evidence="14">
    <location>
        <begin position="1007"/>
        <end position="1009"/>
    </location>
</feature>
<feature type="strand" evidence="14">
    <location>
        <begin position="1010"/>
        <end position="1012"/>
    </location>
</feature>
<feature type="modified residue" description="Omega-N-methylarginine" evidence="13">
    <location sequence="O76041-2">
        <position position="96"/>
    </location>
</feature>
<keyword id="KW-0002">3D-structure</keyword>
<keyword id="KW-0009">Actin-binding</keyword>
<keyword id="KW-0025">Alternative splicing</keyword>
<keyword id="KW-0963">Cytoplasm</keyword>
<keyword id="KW-0488">Methylation</keyword>
<keyword id="KW-1267">Proteomics identification</keyword>
<keyword id="KW-1185">Reference proteome</keyword>
<keyword id="KW-0677">Repeat</keyword>
<keyword id="KW-0728">SH3 domain</keyword>
<organism>
    <name type="scientific">Homo sapiens</name>
    <name type="common">Human</name>
    <dbReference type="NCBI Taxonomy" id="9606"/>
    <lineage>
        <taxon>Eukaryota</taxon>
        <taxon>Metazoa</taxon>
        <taxon>Chordata</taxon>
        <taxon>Craniata</taxon>
        <taxon>Vertebrata</taxon>
        <taxon>Euteleostomi</taxon>
        <taxon>Mammalia</taxon>
        <taxon>Eutheria</taxon>
        <taxon>Euarchontoglires</taxon>
        <taxon>Primates</taxon>
        <taxon>Haplorrhini</taxon>
        <taxon>Catarrhini</taxon>
        <taxon>Hominidae</taxon>
        <taxon>Homo</taxon>
    </lineage>
</organism>
<proteinExistence type="evidence at protein level"/>
<name>NEBL_HUMAN</name>
<gene>
    <name evidence="11" type="primary">NEBL</name>
    <name evidence="11" type="synonym">C10orf113</name>
    <name type="synonym">LNEBL</name>
</gene>
<evidence type="ECO:0000255" key="1">
    <source>
        <dbReference type="PROSITE-ProRule" id="PRU00192"/>
    </source>
</evidence>
<evidence type="ECO:0000256" key="2">
    <source>
        <dbReference type="SAM" id="MobiDB-lite"/>
    </source>
</evidence>
<evidence type="ECO:0000269" key="3">
    <source>
    </source>
</evidence>
<evidence type="ECO:0000269" key="4">
    <source>
    </source>
</evidence>
<evidence type="ECO:0000269" key="5">
    <source>
    </source>
</evidence>
<evidence type="ECO:0000269" key="6">
    <source>
    </source>
</evidence>
<evidence type="ECO:0000303" key="7">
    <source>
    </source>
</evidence>
<evidence type="ECO:0000303" key="8">
    <source>
    </source>
</evidence>
<evidence type="ECO:0000303" key="9">
    <source>
    </source>
</evidence>
<evidence type="ECO:0000305" key="10"/>
<evidence type="ECO:0000312" key="11">
    <source>
        <dbReference type="HGNC" id="HGNC:16932"/>
    </source>
</evidence>
<evidence type="ECO:0007744" key="12">
    <source>
        <dbReference type="PDB" id="4F14"/>
    </source>
</evidence>
<evidence type="ECO:0007744" key="13">
    <source>
    </source>
</evidence>
<evidence type="ECO:0007829" key="14">
    <source>
        <dbReference type="PDB" id="4F14"/>
    </source>
</evidence>
<accession>O76041</accession>
<accession>B0YJ45</accession>
<accession>B9EIM9</accession>
<accession>E9PRX7</accession>
<accession>Q2TBD0</accession>
<accession>Q5VZT2</accession>
<accession>Q70I54</accession>
<accession>Q9UIC4</accession>
<sequence length="1014" mass="116453">MRVPVFEDIKDETEEEKIGEEENEEDQVFYKPVIEDLSMELARKCTELISDIRYKEEFKKSKDKCTFVTDSPMLNHVKNIGAFISEAKYKGTIKADLSNSLYKRMPATIDSVFAGEVTQLQSEVAYKQKHDAAKGFSDYAHMKEPPEVKHAMEVNKHQSNISYRKDVQDTHTYSAELDRPDIKMATQISKIISNAEYKKGQGIMNKEPAVIGRPDFEHAVEASKLSSQIKYKEKFDNEMKDKKHHYNPLESASFRQNQLAATLASNVKYKKDIQNMHDPVSDLPNLLFLDHVLKASKMLSGREYKKLFEENKGMYHFDADAVEHLHHKGNAVLQSQVKYKEEYEKNKGKPMLEFVETPSYQASKEAQKMQSEKVYKEDFEKEIKGRSSLDLDKTPEFLHVKYITNLLREKEYKKDLENEIKGKGMELNSEVLDIQRAKRASEMASEKEYKKDLESIIKGKGMQAGTDTLEMQHAKKAAEIASEKDYKRDLETEIKGKGMQVSTDTLDVQRAKKASEMASQKQYKKDLENEIKGKGMQVSMDIPDILRAKRTSEIYSQRKYKDEAEKMLSNYSTIADTPEIQRIKTTQQNISAVFYKKEVGAGTAVKDSPEIERVKKNQQNISSVKYKEEIKHATAISDPPELKRVKENQKNISNLQYKEQNYKATPVSMTPEIERVRRNQEQLSAVKYKGELQRGTAISDPPELKRAKENQKNISNVYYRGQLGRATTLSVTPEMERVKKNQENISSVKYTQDHKQMKGRPSLILDTPAMRHVKEAQNHISMVKYHEDFEKTKGRGFTPVVDDPVTERVRKNTQVVSDAAYKGVHPHIVEMDRRPGIIVDLKVWRTDPGSIFDLDPLEDNIQSRSLHMLSEKASHYRRHWSRSHSSSTFGTGLGDDRSEISEIYPSFSCCSEVTRPSDEGAPVLPGAYQQSHSQGYGYMHQTSVSSMRSMQHSPNLRTYRAMYDYSAQDEDEVSFRDGDYIVNVQPIDDGWMYGTVQRTGRTGMLPANYIEFVN</sequence>
<dbReference type="EMBL" id="Y16241">
    <property type="protein sequence ID" value="CAA76130.1"/>
    <property type="molecule type" value="mRNA"/>
</dbReference>
<dbReference type="EMBL" id="Y17673">
    <property type="protein sequence ID" value="CAA76810.1"/>
    <property type="molecule type" value="mRNA"/>
</dbReference>
<dbReference type="EMBL" id="AF047368">
    <property type="protein sequence ID" value="AAF24858.1"/>
    <property type="molecule type" value="mRNA"/>
</dbReference>
<dbReference type="EMBL" id="AJ580772">
    <property type="protein sequence ID" value="CAE45323.1"/>
    <property type="molecule type" value="mRNA"/>
</dbReference>
<dbReference type="EMBL" id="AK295186">
    <property type="protein sequence ID" value="BAG58190.1"/>
    <property type="molecule type" value="mRNA"/>
</dbReference>
<dbReference type="EMBL" id="EF445000">
    <property type="protein sequence ID" value="ACA06022.1"/>
    <property type="molecule type" value="Genomic_DNA"/>
</dbReference>
<dbReference type="EMBL" id="EF445000">
    <property type="protein sequence ID" value="ACA06023.1"/>
    <property type="molecule type" value="Genomic_DNA"/>
</dbReference>
<dbReference type="EMBL" id="EF445000">
    <property type="protein sequence ID" value="ACA06024.1"/>
    <property type="molecule type" value="Genomic_DNA"/>
</dbReference>
<dbReference type="EMBL" id="EF445000">
    <property type="protein sequence ID" value="ACA06026.1"/>
    <property type="molecule type" value="Genomic_DNA"/>
</dbReference>
<dbReference type="EMBL" id="AL359175">
    <property type="status" value="NOT_ANNOTATED_CDS"/>
    <property type="molecule type" value="Genomic_DNA"/>
</dbReference>
<dbReference type="EMBL" id="AL731547">
    <property type="status" value="NOT_ANNOTATED_CDS"/>
    <property type="molecule type" value="Genomic_DNA"/>
</dbReference>
<dbReference type="EMBL" id="AL157398">
    <property type="status" value="NOT_ANNOTATED_CDS"/>
    <property type="molecule type" value="Genomic_DNA"/>
</dbReference>
<dbReference type="EMBL" id="AL158160">
    <property type="status" value="NOT_ANNOTATED_CDS"/>
    <property type="molecule type" value="Genomic_DNA"/>
</dbReference>
<dbReference type="EMBL" id="CH471072">
    <property type="protein sequence ID" value="EAW86175.1"/>
    <property type="molecule type" value="Genomic_DNA"/>
</dbReference>
<dbReference type="EMBL" id="BC110453">
    <property type="protein sequence ID" value="AAI10454.1"/>
    <property type="molecule type" value="mRNA"/>
</dbReference>
<dbReference type="EMBL" id="BC126132">
    <property type="protein sequence ID" value="AAI26133.1"/>
    <property type="molecule type" value="mRNA"/>
</dbReference>
<dbReference type="EMBL" id="BC126134">
    <property type="protein sequence ID" value="AAI26135.1"/>
    <property type="molecule type" value="mRNA"/>
</dbReference>
<dbReference type="EMBL" id="BC140744">
    <property type="protein sequence ID" value="AAI40745.1"/>
    <property type="status" value="ALT_SEQ"/>
    <property type="molecule type" value="mRNA"/>
</dbReference>
<dbReference type="EMBL" id="BC144447">
    <property type="status" value="NOT_ANNOTATED_CDS"/>
    <property type="molecule type" value="mRNA"/>
</dbReference>
<dbReference type="CCDS" id="CCDS7133.1">
    <molecule id="O76041-2"/>
</dbReference>
<dbReference type="CCDS" id="CCDS7134.1">
    <molecule id="O76041-1"/>
</dbReference>
<dbReference type="RefSeq" id="NP_001010896.2">
    <property type="nucleotide sequence ID" value="NM_001010896.2"/>
</dbReference>
<dbReference type="RefSeq" id="NP_001166955.1">
    <property type="nucleotide sequence ID" value="NM_001173484.1"/>
</dbReference>
<dbReference type="RefSeq" id="NP_006384.1">
    <molecule id="O76041-1"/>
    <property type="nucleotide sequence ID" value="NM_006393.3"/>
</dbReference>
<dbReference type="RefSeq" id="NP_998734.1">
    <molecule id="O76041-2"/>
    <property type="nucleotide sequence ID" value="NM_213569.2"/>
</dbReference>
<dbReference type="PDB" id="4F14">
    <property type="method" value="X-ray"/>
    <property type="resolution" value="1.20 A"/>
    <property type="chains" value="A=955-1014"/>
</dbReference>
<dbReference type="PDBsum" id="4F14"/>
<dbReference type="SMR" id="O76041"/>
<dbReference type="BioGRID" id="115784">
    <property type="interactions" value="81"/>
</dbReference>
<dbReference type="FunCoup" id="O76041">
    <property type="interactions" value="131"/>
</dbReference>
<dbReference type="IntAct" id="O76041">
    <property type="interactions" value="64"/>
</dbReference>
<dbReference type="MINT" id="O76041"/>
<dbReference type="STRING" id="9606.ENSP00000366326"/>
<dbReference type="GlyGen" id="O76041">
    <property type="glycosylation" value="2 sites, 1 O-linked glycan (2 sites)"/>
</dbReference>
<dbReference type="iPTMnet" id="O76041"/>
<dbReference type="PhosphoSitePlus" id="O76041"/>
<dbReference type="SwissPalm" id="O76041"/>
<dbReference type="BioMuta" id="C10orf113"/>
<dbReference type="BioMuta" id="NEBL"/>
<dbReference type="jPOST" id="O76041"/>
<dbReference type="MassIVE" id="O76041"/>
<dbReference type="PaxDb" id="9606-ENSP00000433646"/>
<dbReference type="PeptideAtlas" id="O76041"/>
<dbReference type="ProteomicsDB" id="50360">
    <molecule id="O76041-1"/>
</dbReference>
<dbReference type="ProteomicsDB" id="50361">
    <molecule id="O76041-2"/>
</dbReference>
<dbReference type="Pumba" id="O76041"/>
<dbReference type="ABCD" id="O76041">
    <property type="antibodies" value="6 sequenced antibodies"/>
</dbReference>
<dbReference type="Antibodypedia" id="2823">
    <property type="antibodies" value="75 antibodies from 18 providers"/>
</dbReference>
<dbReference type="DNASU" id="10529"/>
<dbReference type="Ensembl" id="ENST00000377122.9">
    <molecule id="O76041-1"/>
    <property type="protein sequence ID" value="ENSP00000366326.4"/>
    <property type="gene ID" value="ENSG00000078114.19"/>
</dbReference>
<dbReference type="Ensembl" id="ENST00000417816.2">
    <molecule id="O76041-2"/>
    <property type="protein sequence ID" value="ENSP00000393896.2"/>
    <property type="gene ID" value="ENSG00000078114.19"/>
</dbReference>
<dbReference type="GeneID" id="10529"/>
<dbReference type="KEGG" id="hsa:10529"/>
<dbReference type="MANE-Select" id="ENST00000377122.9">
    <property type="protein sequence ID" value="ENSP00000366326.4"/>
    <property type="RefSeq nucleotide sequence ID" value="NM_006393.3"/>
    <property type="RefSeq protein sequence ID" value="NP_006384.1"/>
</dbReference>
<dbReference type="UCSC" id="uc001iqi.4">
    <molecule id="O76041-1"/>
    <property type="organism name" value="human"/>
</dbReference>
<dbReference type="AGR" id="HGNC:16932"/>
<dbReference type="CTD" id="10529"/>
<dbReference type="DisGeNET" id="10529"/>
<dbReference type="GeneCards" id="NEBL"/>
<dbReference type="HGNC" id="HGNC:16932">
    <property type="gene designation" value="NEBL"/>
</dbReference>
<dbReference type="HPA" id="ENSG00000078114">
    <property type="expression patterns" value="Tissue enriched (heart)"/>
</dbReference>
<dbReference type="MalaCards" id="NEBL"/>
<dbReference type="MIM" id="605491">
    <property type="type" value="gene"/>
</dbReference>
<dbReference type="neXtProt" id="NX_O76041"/>
<dbReference type="OpenTargets" id="ENSG00000078114"/>
<dbReference type="PharmGKB" id="PA134981177"/>
<dbReference type="VEuPathDB" id="HostDB:ENSG00000078114"/>
<dbReference type="eggNOG" id="ENOG502TDXB">
    <property type="taxonomic scope" value="Eukaryota"/>
</dbReference>
<dbReference type="eggNOG" id="KOG1702">
    <property type="taxonomic scope" value="Eukaryota"/>
</dbReference>
<dbReference type="GeneTree" id="ENSGT00940000156390"/>
<dbReference type="HOGENOM" id="CLU_014106_0_0_1"/>
<dbReference type="InParanoid" id="O76041"/>
<dbReference type="OMA" id="CEAHYPK"/>
<dbReference type="OrthoDB" id="10070368at2759"/>
<dbReference type="PAN-GO" id="O76041">
    <property type="GO annotations" value="3 GO annotations based on evolutionary models"/>
</dbReference>
<dbReference type="PhylomeDB" id="O76041"/>
<dbReference type="TreeFam" id="TF319104"/>
<dbReference type="TreeFam" id="TF353304"/>
<dbReference type="PathwayCommons" id="O76041"/>
<dbReference type="SignaLink" id="O76041"/>
<dbReference type="BioGRID-ORCS" id="10529">
    <property type="hits" value="5 hits in 1154 CRISPR screens"/>
</dbReference>
<dbReference type="BioGRID-ORCS" id="387638">
    <property type="hits" value="6 hits in 1114 CRISPR screens"/>
</dbReference>
<dbReference type="CD-CODE" id="FB4E32DD">
    <property type="entry name" value="Presynaptic clusters and postsynaptic densities"/>
</dbReference>
<dbReference type="ChiTaRS" id="NEBL">
    <property type="organism name" value="human"/>
</dbReference>
<dbReference type="EvolutionaryTrace" id="O76041"/>
<dbReference type="GenomeRNAi" id="10529"/>
<dbReference type="Pharos" id="O76041">
    <property type="development level" value="Tbio"/>
</dbReference>
<dbReference type="PRO" id="PR:O76041"/>
<dbReference type="Proteomes" id="UP000005640">
    <property type="component" value="Chromosome 10"/>
</dbReference>
<dbReference type="RNAct" id="O76041">
    <property type="molecule type" value="protein"/>
</dbReference>
<dbReference type="Bgee" id="ENSG00000078114">
    <property type="expression patterns" value="Expressed in heart right ventricle and 198 other cell types or tissues"/>
</dbReference>
<dbReference type="ExpressionAtlas" id="O76041">
    <property type="expression patterns" value="baseline and differential"/>
</dbReference>
<dbReference type="GO" id="GO:0070062">
    <property type="term" value="C:extracellular exosome"/>
    <property type="evidence" value="ECO:0007005"/>
    <property type="project" value="UniProtKB"/>
</dbReference>
<dbReference type="GO" id="GO:0031674">
    <property type="term" value="C:I band"/>
    <property type="evidence" value="ECO:0000303"/>
    <property type="project" value="UniProtKB"/>
</dbReference>
<dbReference type="GO" id="GO:0001725">
    <property type="term" value="C:stress fiber"/>
    <property type="evidence" value="ECO:0000314"/>
    <property type="project" value="UniProtKB"/>
</dbReference>
<dbReference type="GO" id="GO:0030018">
    <property type="term" value="C:Z disc"/>
    <property type="evidence" value="ECO:0000314"/>
    <property type="project" value="UniProtKB"/>
</dbReference>
<dbReference type="GO" id="GO:0051015">
    <property type="term" value="F:actin filament binding"/>
    <property type="evidence" value="ECO:0000314"/>
    <property type="project" value="UniProtKB"/>
</dbReference>
<dbReference type="GO" id="GO:0008092">
    <property type="term" value="F:cytoskeletal protein binding"/>
    <property type="evidence" value="ECO:0000314"/>
    <property type="project" value="UniProtKB"/>
</dbReference>
<dbReference type="GO" id="GO:0031005">
    <property type="term" value="F:filamin binding"/>
    <property type="evidence" value="ECO:0000353"/>
    <property type="project" value="UniProtKB"/>
</dbReference>
<dbReference type="GO" id="GO:0008307">
    <property type="term" value="F:structural constituent of muscle"/>
    <property type="evidence" value="ECO:0000303"/>
    <property type="project" value="UniProtKB"/>
</dbReference>
<dbReference type="GO" id="GO:0005523">
    <property type="term" value="F:tropomyosin binding"/>
    <property type="evidence" value="ECO:0000353"/>
    <property type="project" value="UniProtKB"/>
</dbReference>
<dbReference type="GO" id="GO:0071691">
    <property type="term" value="P:cardiac muscle thin filament assembly"/>
    <property type="evidence" value="ECO:0000315"/>
    <property type="project" value="UniProtKB"/>
</dbReference>
<dbReference type="CDD" id="cd11935">
    <property type="entry name" value="SH3_Nebulette_C"/>
    <property type="match status" value="1"/>
</dbReference>
<dbReference type="FunFam" id="2.30.30.40:FF:000007">
    <property type="entry name" value="nebulin isoform X1"/>
    <property type="match status" value="1"/>
</dbReference>
<dbReference type="Gene3D" id="2.30.30.40">
    <property type="entry name" value="SH3 Domains"/>
    <property type="match status" value="1"/>
</dbReference>
<dbReference type="InterPro" id="IPR055297">
    <property type="entry name" value="NEBU/NEBL"/>
</dbReference>
<dbReference type="InterPro" id="IPR035631">
    <property type="entry name" value="Nebulette_SH3"/>
</dbReference>
<dbReference type="InterPro" id="IPR000900">
    <property type="entry name" value="Nebulin_repeat"/>
</dbReference>
<dbReference type="InterPro" id="IPR036028">
    <property type="entry name" value="SH3-like_dom_sf"/>
</dbReference>
<dbReference type="InterPro" id="IPR001452">
    <property type="entry name" value="SH3_domain"/>
</dbReference>
<dbReference type="PANTHER" id="PTHR11039:SF48">
    <property type="entry name" value="NEBULETTE"/>
    <property type="match status" value="1"/>
</dbReference>
<dbReference type="PANTHER" id="PTHR11039">
    <property type="entry name" value="NEBULIN"/>
    <property type="match status" value="1"/>
</dbReference>
<dbReference type="Pfam" id="PF00880">
    <property type="entry name" value="Nebulin"/>
    <property type="match status" value="14"/>
</dbReference>
<dbReference type="Pfam" id="PF14604">
    <property type="entry name" value="SH3_9"/>
    <property type="match status" value="1"/>
</dbReference>
<dbReference type="PRINTS" id="PR00452">
    <property type="entry name" value="SH3DOMAIN"/>
</dbReference>
<dbReference type="SMART" id="SM00227">
    <property type="entry name" value="NEBU"/>
    <property type="match status" value="23"/>
</dbReference>
<dbReference type="SMART" id="SM00326">
    <property type="entry name" value="SH3"/>
    <property type="match status" value="1"/>
</dbReference>
<dbReference type="SUPFAM" id="SSF50044">
    <property type="entry name" value="SH3-domain"/>
    <property type="match status" value="1"/>
</dbReference>
<dbReference type="PROSITE" id="PS51216">
    <property type="entry name" value="NEBULIN"/>
    <property type="match status" value="23"/>
</dbReference>
<dbReference type="PROSITE" id="PS50002">
    <property type="entry name" value="SH3"/>
    <property type="match status" value="1"/>
</dbReference>